<protein>
    <recommendedName>
        <fullName>Tubulin beta-8 chain</fullName>
    </recommendedName>
</protein>
<gene>
    <name type="primary">TUBB8</name>
</gene>
<keyword id="KW-0963">Cytoplasm</keyword>
<keyword id="KW-0206">Cytoskeleton</keyword>
<keyword id="KW-0342">GTP-binding</keyword>
<keyword id="KW-1017">Isopeptide bond</keyword>
<keyword id="KW-0460">Magnesium</keyword>
<keyword id="KW-0479">Metal-binding</keyword>
<keyword id="KW-0493">Microtubule</keyword>
<keyword id="KW-0547">Nucleotide-binding</keyword>
<keyword id="KW-0597">Phosphoprotein</keyword>
<keyword id="KW-1185">Reference proteome</keyword>
<evidence type="ECO:0000250" key="1">
    <source>
        <dbReference type="UniProtKB" id="P07437"/>
    </source>
</evidence>
<evidence type="ECO:0000250" key="2">
    <source>
        <dbReference type="UniProtKB" id="P68363"/>
    </source>
</evidence>
<evidence type="ECO:0000250" key="3">
    <source>
        <dbReference type="UniProtKB" id="Q13509"/>
    </source>
</evidence>
<evidence type="ECO:0000250" key="4">
    <source>
        <dbReference type="UniProtKB" id="Q2T9S0"/>
    </source>
</evidence>
<evidence type="ECO:0000250" key="5">
    <source>
        <dbReference type="UniProtKB" id="Q3ZCM7"/>
    </source>
</evidence>
<evidence type="ECO:0000250" key="6">
    <source>
        <dbReference type="UniProtKB" id="Q71U36"/>
    </source>
</evidence>
<evidence type="ECO:0000250" key="7">
    <source>
        <dbReference type="UniProtKB" id="Q922F4"/>
    </source>
</evidence>
<evidence type="ECO:0000256" key="8">
    <source>
        <dbReference type="SAM" id="MobiDB-lite"/>
    </source>
</evidence>
<evidence type="ECO:0000305" key="9"/>
<accession>Q8WP14</accession>
<sequence>MREIVLTQIGQCGNQIGAKFWEVISDEHAINSAGTYHGDSHLQLERINVYYNEASGGRYVPRAVLVDLEPGTMDSVRSGPFGQVFRPDNFIFGQCGAGNNWAKGHYTEGAELMESVMDVVRKEAESCDCLQGFQLTHSLGGGTGSGMGTLLLSKIREEYPDRIINTFSILPSPKVSDTVVEPYNATLSVHQLIENADETFCIDNEALYDICSKTLKLPTPTYGDLNHLVCATMSGVTTCLRFPGQLNADLRKLAVNMVPFPRLHFFMPGFAPLTSRGSQQYRALTVAELTQQMFDAKNMMAACDPRHGRYLTAAAIFRGRMPMREVDEQMFNIQDKNSSYFADWLPNNVKTAVCDIPPRGLKMSATFIGNNTAIQELFKRVSEQFTAMFRRKAFLHWYTGEGMDEMEFTEAESNMNDLVSEYQQYQDATAEEEEDEEYAEEEVA</sequence>
<reference key="1">
    <citation type="journal article" date="2002" name="Am. J. Hum. Genet.">
        <title>A cascade of complex subtelomeric duplications during the evolution of the hominoid and Old World monkey genomes.</title>
        <authorList>
            <person name="van Geel M."/>
            <person name="Eichler E.E."/>
            <person name="Beck A.F."/>
            <person name="Shan Z."/>
            <person name="Haaf T."/>
            <person name="van der Maarel S.M."/>
            <person name="Frants R.R."/>
            <person name="de Jong P.J."/>
        </authorList>
    </citation>
    <scope>NUCLEOTIDE SEQUENCE [GENOMIC DNA]</scope>
</reference>
<organism>
    <name type="scientific">Pan troglodytes</name>
    <name type="common">Chimpanzee</name>
    <dbReference type="NCBI Taxonomy" id="9598"/>
    <lineage>
        <taxon>Eukaryota</taxon>
        <taxon>Metazoa</taxon>
        <taxon>Chordata</taxon>
        <taxon>Craniata</taxon>
        <taxon>Vertebrata</taxon>
        <taxon>Euteleostomi</taxon>
        <taxon>Mammalia</taxon>
        <taxon>Eutheria</taxon>
        <taxon>Euarchontoglires</taxon>
        <taxon>Primates</taxon>
        <taxon>Haplorrhini</taxon>
        <taxon>Catarrhini</taxon>
        <taxon>Hominidae</taxon>
        <taxon>Pan</taxon>
    </lineage>
</organism>
<feature type="chain" id="PRO_0000048259" description="Tubulin beta-8 chain">
    <location>
        <begin position="1"/>
        <end position="444"/>
    </location>
</feature>
<feature type="region of interest" description="Disordered" evidence="8">
    <location>
        <begin position="423"/>
        <end position="444"/>
    </location>
</feature>
<feature type="short sequence motif" description="MREI motif" evidence="1">
    <location>
        <begin position="1"/>
        <end position="4"/>
    </location>
</feature>
<feature type="compositionally biased region" description="Acidic residues" evidence="8">
    <location>
        <begin position="429"/>
        <end position="444"/>
    </location>
</feature>
<feature type="binding site" evidence="3">
    <location>
        <position position="11"/>
    </location>
    <ligand>
        <name>GTP</name>
        <dbReference type="ChEBI" id="CHEBI:37565"/>
    </ligand>
</feature>
<feature type="binding site" evidence="2">
    <location>
        <position position="69"/>
    </location>
    <ligand>
        <name>GTP</name>
        <dbReference type="ChEBI" id="CHEBI:37565"/>
    </ligand>
</feature>
<feature type="binding site" evidence="2">
    <location>
        <position position="69"/>
    </location>
    <ligand>
        <name>Mg(2+)</name>
        <dbReference type="ChEBI" id="CHEBI:18420"/>
    </ligand>
</feature>
<feature type="binding site" evidence="3">
    <location>
        <position position="138"/>
    </location>
    <ligand>
        <name>GTP</name>
        <dbReference type="ChEBI" id="CHEBI:37565"/>
    </ligand>
</feature>
<feature type="binding site" evidence="3">
    <location>
        <position position="142"/>
    </location>
    <ligand>
        <name>GTP</name>
        <dbReference type="ChEBI" id="CHEBI:37565"/>
    </ligand>
</feature>
<feature type="binding site" evidence="3">
    <location>
        <position position="143"/>
    </location>
    <ligand>
        <name>GTP</name>
        <dbReference type="ChEBI" id="CHEBI:37565"/>
    </ligand>
</feature>
<feature type="binding site" evidence="3">
    <location>
        <position position="144"/>
    </location>
    <ligand>
        <name>GTP</name>
        <dbReference type="ChEBI" id="CHEBI:37565"/>
    </ligand>
</feature>
<feature type="binding site" evidence="3">
    <location>
        <position position="204"/>
    </location>
    <ligand>
        <name>GTP</name>
        <dbReference type="ChEBI" id="CHEBI:37565"/>
    </ligand>
</feature>
<feature type="binding site" evidence="3">
    <location>
        <position position="226"/>
    </location>
    <ligand>
        <name>GTP</name>
        <dbReference type="ChEBI" id="CHEBI:37565"/>
    </ligand>
</feature>
<feature type="modified residue" description="Phosphoserine; by CDK1" evidence="5">
    <location>
        <position position="172"/>
    </location>
</feature>
<feature type="modified residue" description="5-glutamyl polyglutamate" evidence="4">
    <location>
        <position position="436"/>
    </location>
</feature>
<comment type="function">
    <text evidence="5">Tubulin is the major constituent of microtubules, a cylinder consisting of laterally associated linear protofilaments composed of alpha- and beta-tubulin heterodimers. Microtubules grow by the addition of GTP-tubulin dimers to the microtubule end, where a stabilizing cap forms. Below the cap, tubulin dimers are in GDP-bound state, owing to GTPase activity of alpha-tubulin. Has a key role in meiotic spindle assembly and oocyte maturation (By similarity).</text>
</comment>
<comment type="cofactor">
    <cofactor evidence="2">
        <name>Mg(2+)</name>
        <dbReference type="ChEBI" id="CHEBI:18420"/>
    </cofactor>
</comment>
<comment type="subunit">
    <text>Dimer of alpha and beta chains. A typical microtubule is a hollow water-filled tube with an outer diameter of 25 nm and an inner diameter of 15 nM. Alpha-beta heterodimers associate head-to-tail to form protofilaments running lengthwise along the microtubule wall with the beta-tubulin subunit facing the microtubule plus end conferring a structural polarity. Microtubules usually have 13 protofilaments but different protofilament numbers can be found in some organisms and specialized cells.</text>
</comment>
<comment type="subcellular location">
    <subcellularLocation>
        <location evidence="5">Cytoplasm</location>
        <location evidence="5">Cytoskeleton</location>
    </subcellularLocation>
    <subcellularLocation>
        <location evidence="5">Cytoplasm</location>
        <location evidence="5">Cytoskeleton</location>
        <location evidence="5">Spindle</location>
    </subcellularLocation>
</comment>
<comment type="domain">
    <text evidence="1">The MREI motif is common among all beta-tubulin isoforms and may be critical for tubulin autoregulation.</text>
</comment>
<comment type="PTM">
    <text evidence="7">Some glutamate residues at the C-terminus are polyglycylated, resulting in polyglycine chains on the gamma-carboxyl group. Glycylation is mainly limited to tubulin incorporated into axonemes (cilia and flagella) whereas glutamylation is prevalent in neuronal cells, centrioles, axonemes, and the mitotic spindle. Both modifications can coexist on the same protein on adjacent residues, and lowering polyglycylation levels increases polyglutamylation, and reciprocally. Cilia and flagella glycylation is required for their stability and maintenance. Flagella glycylation controls sperm motility.</text>
</comment>
<comment type="PTM">
    <text evidence="6 7">Some glutamate residues at the C-terminus are polyglutamylated, resulting in polyglutamate chains on the gamma-carboxyl group (By similarity). Polyglutamylation plays a key role in microtubule severing by spastin (SPAST). SPAST preferentially recognizes and acts on microtubules decorated with short polyglutamate tails: severing activity by SPAST increases as the number of glutamates per tubulin rises from one to eight, but decreases beyond this glutamylation threshold (By similarity). Glutamylation is also involved in cilia motility (By similarity).</text>
</comment>
<comment type="PTM">
    <text evidence="5">Phosphorylated on Ser-172 by CDK1 during the cell cycle, from metaphase to telophase, but not in interphase. This phosphorylation inhibits tubulin incorporation into microtubules.</text>
</comment>
<comment type="similarity">
    <text evidence="9">Belongs to the tubulin family.</text>
</comment>
<name>TBB8_PANTR</name>
<dbReference type="EMBL" id="AF355128">
    <property type="protein sequence ID" value="AAL32435.1"/>
    <property type="molecule type" value="Genomic_DNA"/>
</dbReference>
<dbReference type="RefSeq" id="XP_063637332.1">
    <property type="nucleotide sequence ID" value="XM_063781262.1"/>
</dbReference>
<dbReference type="SMR" id="Q8WP14"/>
<dbReference type="FunCoup" id="Q8WP14">
    <property type="interactions" value="1381"/>
</dbReference>
<dbReference type="STRING" id="9598.ENSPTRP00000083806"/>
<dbReference type="PaxDb" id="9598-ENSPTRP00000050906"/>
<dbReference type="GeneID" id="739035"/>
<dbReference type="eggNOG" id="KOG1375">
    <property type="taxonomic scope" value="Eukaryota"/>
</dbReference>
<dbReference type="InParanoid" id="Q8WP14"/>
<dbReference type="Proteomes" id="UP000002277">
    <property type="component" value="Unplaced"/>
</dbReference>
<dbReference type="GO" id="GO:0005737">
    <property type="term" value="C:cytoplasm"/>
    <property type="evidence" value="ECO:0000318"/>
    <property type="project" value="GO_Central"/>
</dbReference>
<dbReference type="GO" id="GO:0045171">
    <property type="term" value="C:intercellular bridge"/>
    <property type="evidence" value="ECO:0007669"/>
    <property type="project" value="UniProtKB-ARBA"/>
</dbReference>
<dbReference type="GO" id="GO:0072687">
    <property type="term" value="C:meiotic spindle"/>
    <property type="evidence" value="ECO:0000250"/>
    <property type="project" value="UniProtKB"/>
</dbReference>
<dbReference type="GO" id="GO:0005874">
    <property type="term" value="C:microtubule"/>
    <property type="evidence" value="ECO:0000318"/>
    <property type="project" value="GO_Central"/>
</dbReference>
<dbReference type="GO" id="GO:0072686">
    <property type="term" value="C:mitotic spindle"/>
    <property type="evidence" value="ECO:0007669"/>
    <property type="project" value="UniProtKB-ARBA"/>
</dbReference>
<dbReference type="GO" id="GO:0005525">
    <property type="term" value="F:GTP binding"/>
    <property type="evidence" value="ECO:0000318"/>
    <property type="project" value="GO_Central"/>
</dbReference>
<dbReference type="GO" id="GO:0003924">
    <property type="term" value="F:GTPase activity"/>
    <property type="evidence" value="ECO:0007669"/>
    <property type="project" value="InterPro"/>
</dbReference>
<dbReference type="GO" id="GO:0046872">
    <property type="term" value="F:metal ion binding"/>
    <property type="evidence" value="ECO:0007669"/>
    <property type="project" value="UniProtKB-KW"/>
</dbReference>
<dbReference type="GO" id="GO:0005200">
    <property type="term" value="F:structural constituent of cytoskeleton"/>
    <property type="evidence" value="ECO:0000318"/>
    <property type="project" value="GO_Central"/>
</dbReference>
<dbReference type="GO" id="GO:0000226">
    <property type="term" value="P:microtubule cytoskeleton organization"/>
    <property type="evidence" value="ECO:0000318"/>
    <property type="project" value="GO_Central"/>
</dbReference>
<dbReference type="GO" id="GO:0000278">
    <property type="term" value="P:mitotic cell cycle"/>
    <property type="evidence" value="ECO:0000318"/>
    <property type="project" value="GO_Central"/>
</dbReference>
<dbReference type="GO" id="GO:0001556">
    <property type="term" value="P:oocyte maturation"/>
    <property type="evidence" value="ECO:0000250"/>
    <property type="project" value="UniProtKB"/>
</dbReference>
<dbReference type="GO" id="GO:0007056">
    <property type="term" value="P:spindle assembly involved in female meiosis"/>
    <property type="evidence" value="ECO:0000250"/>
    <property type="project" value="UniProtKB"/>
</dbReference>
<dbReference type="CDD" id="cd02187">
    <property type="entry name" value="beta_tubulin"/>
    <property type="match status" value="1"/>
</dbReference>
<dbReference type="FunFam" id="1.10.287.600:FF:000002">
    <property type="entry name" value="Tubulin beta chain"/>
    <property type="match status" value="1"/>
</dbReference>
<dbReference type="FunFam" id="3.30.1330.20:FF:000002">
    <property type="entry name" value="Tubulin beta chain"/>
    <property type="match status" value="1"/>
</dbReference>
<dbReference type="FunFam" id="3.40.50.1440:FF:000025">
    <property type="entry name" value="Tubulin beta chain"/>
    <property type="match status" value="1"/>
</dbReference>
<dbReference type="FunFam" id="3.40.50.1440:FF:000018">
    <property type="entry name" value="Tubulin beta chain, putative"/>
    <property type="match status" value="1"/>
</dbReference>
<dbReference type="Gene3D" id="1.10.287.600">
    <property type="entry name" value="Helix hairpin bin"/>
    <property type="match status" value="1"/>
</dbReference>
<dbReference type="Gene3D" id="3.30.1330.20">
    <property type="entry name" value="Tubulin/FtsZ, C-terminal domain"/>
    <property type="match status" value="1"/>
</dbReference>
<dbReference type="Gene3D" id="3.40.50.1440">
    <property type="entry name" value="Tubulin/FtsZ, GTPase domain"/>
    <property type="match status" value="1"/>
</dbReference>
<dbReference type="InterPro" id="IPR013838">
    <property type="entry name" value="Beta-tubulin_BS"/>
</dbReference>
<dbReference type="InterPro" id="IPR002453">
    <property type="entry name" value="Beta_tubulin"/>
</dbReference>
<dbReference type="InterPro" id="IPR008280">
    <property type="entry name" value="Tub_FtsZ_C"/>
</dbReference>
<dbReference type="InterPro" id="IPR000217">
    <property type="entry name" value="Tubulin"/>
</dbReference>
<dbReference type="InterPro" id="IPR037103">
    <property type="entry name" value="Tubulin/FtsZ-like_C"/>
</dbReference>
<dbReference type="InterPro" id="IPR018316">
    <property type="entry name" value="Tubulin/FtsZ_2-layer-sand-dom"/>
</dbReference>
<dbReference type="InterPro" id="IPR036525">
    <property type="entry name" value="Tubulin/FtsZ_GTPase_sf"/>
</dbReference>
<dbReference type="InterPro" id="IPR023123">
    <property type="entry name" value="Tubulin_C"/>
</dbReference>
<dbReference type="InterPro" id="IPR017975">
    <property type="entry name" value="Tubulin_CS"/>
</dbReference>
<dbReference type="InterPro" id="IPR003008">
    <property type="entry name" value="Tubulin_FtsZ_GTPase"/>
</dbReference>
<dbReference type="PANTHER" id="PTHR11588">
    <property type="entry name" value="TUBULIN"/>
    <property type="match status" value="1"/>
</dbReference>
<dbReference type="Pfam" id="PF00091">
    <property type="entry name" value="Tubulin"/>
    <property type="match status" value="1"/>
</dbReference>
<dbReference type="Pfam" id="PF03953">
    <property type="entry name" value="Tubulin_C"/>
    <property type="match status" value="1"/>
</dbReference>
<dbReference type="PRINTS" id="PR01163">
    <property type="entry name" value="BETATUBULIN"/>
</dbReference>
<dbReference type="PRINTS" id="PR01161">
    <property type="entry name" value="TUBULIN"/>
</dbReference>
<dbReference type="SMART" id="SM00864">
    <property type="entry name" value="Tubulin"/>
    <property type="match status" value="1"/>
</dbReference>
<dbReference type="SMART" id="SM00865">
    <property type="entry name" value="Tubulin_C"/>
    <property type="match status" value="1"/>
</dbReference>
<dbReference type="SUPFAM" id="SSF55307">
    <property type="entry name" value="Tubulin C-terminal domain-like"/>
    <property type="match status" value="1"/>
</dbReference>
<dbReference type="SUPFAM" id="SSF52490">
    <property type="entry name" value="Tubulin nucleotide-binding domain-like"/>
    <property type="match status" value="1"/>
</dbReference>
<dbReference type="PROSITE" id="PS00227">
    <property type="entry name" value="TUBULIN"/>
    <property type="match status" value="1"/>
</dbReference>
<dbReference type="PROSITE" id="PS00228">
    <property type="entry name" value="TUBULIN_B_AUTOREG"/>
    <property type="match status" value="1"/>
</dbReference>
<proteinExistence type="inferred from homology"/>